<dbReference type="EMBL" id="CP000726">
    <property type="protein sequence ID" value="ABS34196.1"/>
    <property type="molecule type" value="Genomic_DNA"/>
</dbReference>
<dbReference type="RefSeq" id="WP_003400937.1">
    <property type="nucleotide sequence ID" value="NC_009697.1"/>
</dbReference>
<dbReference type="SMR" id="A7FTB7"/>
<dbReference type="KEGG" id="cba:CLB_1265"/>
<dbReference type="HOGENOM" id="CLU_191960_1_0_9"/>
<dbReference type="GO" id="GO:0042601">
    <property type="term" value="C:endospore-forming forespore"/>
    <property type="evidence" value="ECO:0007669"/>
    <property type="project" value="InterPro"/>
</dbReference>
<dbReference type="GO" id="GO:0030436">
    <property type="term" value="P:asexual sporulation"/>
    <property type="evidence" value="ECO:0007669"/>
    <property type="project" value="UniProtKB-UniRule"/>
</dbReference>
<dbReference type="GO" id="GO:0030435">
    <property type="term" value="P:sporulation resulting in formation of a cellular spore"/>
    <property type="evidence" value="ECO:0007669"/>
    <property type="project" value="UniProtKB-KW"/>
</dbReference>
<dbReference type="HAMAP" id="MF_00667">
    <property type="entry name" value="SspH"/>
    <property type="match status" value="1"/>
</dbReference>
<dbReference type="InterPro" id="IPR012610">
    <property type="entry name" value="SASP_SspH"/>
</dbReference>
<dbReference type="NCBIfam" id="TIGR02861">
    <property type="entry name" value="SASP_H"/>
    <property type="match status" value="1"/>
</dbReference>
<dbReference type="Pfam" id="PF08141">
    <property type="entry name" value="SspH"/>
    <property type="match status" value="1"/>
</dbReference>
<evidence type="ECO:0000255" key="1">
    <source>
        <dbReference type="HAMAP-Rule" id="MF_00667"/>
    </source>
</evidence>
<proteinExistence type="inferred from homology"/>
<accession>A7FTB7</accession>
<sequence>MKSERAKQIIDSKKYIPVYYKNTPVHIEKVDNKENIAHIKSLNTDKEIVVNVKTLSECNKLNN</sequence>
<gene>
    <name evidence="1" type="primary">sspH2</name>
    <name type="ordered locus">CLB_1265</name>
</gene>
<protein>
    <recommendedName>
        <fullName evidence="1">Small, acid-soluble spore protein H 2</fullName>
        <shortName evidence="1">SASP H 2</shortName>
    </recommendedName>
</protein>
<feature type="chain" id="PRO_0000329127" description="Small, acid-soluble spore protein H 2">
    <location>
        <begin position="1"/>
        <end position="63"/>
    </location>
</feature>
<name>SSPH2_CLOB1</name>
<organism>
    <name type="scientific">Clostridium botulinum (strain ATCC 19397 / Type A)</name>
    <dbReference type="NCBI Taxonomy" id="441770"/>
    <lineage>
        <taxon>Bacteria</taxon>
        <taxon>Bacillati</taxon>
        <taxon>Bacillota</taxon>
        <taxon>Clostridia</taxon>
        <taxon>Eubacteriales</taxon>
        <taxon>Clostridiaceae</taxon>
        <taxon>Clostridium</taxon>
    </lineage>
</organism>
<reference key="1">
    <citation type="journal article" date="2007" name="PLoS ONE">
        <title>Analysis of the neurotoxin complex genes in Clostridium botulinum A1-A4 and B1 strains: BoNT/A3, /Ba4 and /B1 clusters are located within plasmids.</title>
        <authorList>
            <person name="Smith T.J."/>
            <person name="Hill K.K."/>
            <person name="Foley B.T."/>
            <person name="Detter J.C."/>
            <person name="Munk A.C."/>
            <person name="Bruce D.C."/>
            <person name="Doggett N.A."/>
            <person name="Smith L.A."/>
            <person name="Marks J.D."/>
            <person name="Xie G."/>
            <person name="Brettin T.S."/>
        </authorList>
    </citation>
    <scope>NUCLEOTIDE SEQUENCE [LARGE SCALE GENOMIC DNA]</scope>
    <source>
        <strain>ATCC 19397 / Type A</strain>
    </source>
</reference>
<comment type="subcellular location">
    <subcellularLocation>
        <location evidence="1">Spore core</location>
    </subcellularLocation>
</comment>
<comment type="similarity">
    <text evidence="1">Belongs to the SspH family.</text>
</comment>
<keyword id="KW-0749">Sporulation</keyword>